<gene>
    <name type="primary">dnaK1</name>
    <name type="ordered locus">tll0791</name>
</gene>
<comment type="function">
    <text evidence="1">Acts as a chaperone.</text>
</comment>
<comment type="induction">
    <text evidence="1">By stress conditions e.g. heat shock (By similarity).</text>
</comment>
<comment type="similarity">
    <text evidence="2">Belongs to the heat shock protein 70 family.</text>
</comment>
<proteinExistence type="inferred from homology"/>
<protein>
    <recommendedName>
        <fullName>Chaperone protein dnaK1</fullName>
    </recommendedName>
    <alternativeName>
        <fullName>HSP70-1</fullName>
    </alternativeName>
    <alternativeName>
        <fullName>Heat shock 70 kDa protein 1</fullName>
    </alternativeName>
    <alternativeName>
        <fullName>Heat shock protein 70-1</fullName>
    </alternativeName>
</protein>
<dbReference type="EMBL" id="BA000039">
    <property type="protein sequence ID" value="BAC08342.1"/>
    <property type="molecule type" value="Genomic_DNA"/>
</dbReference>
<dbReference type="RefSeq" id="NP_681580.1">
    <property type="nucleotide sequence ID" value="NC_004113.1"/>
</dbReference>
<dbReference type="RefSeq" id="WP_011056634.1">
    <property type="nucleotide sequence ID" value="NC_004113.1"/>
</dbReference>
<dbReference type="SMR" id="Q8DKR6"/>
<dbReference type="STRING" id="197221.gene:10747382"/>
<dbReference type="EnsemblBacteria" id="BAC08342">
    <property type="protein sequence ID" value="BAC08342"/>
    <property type="gene ID" value="BAC08342"/>
</dbReference>
<dbReference type="KEGG" id="tel:tll0791"/>
<dbReference type="PATRIC" id="fig|197221.4.peg.830"/>
<dbReference type="eggNOG" id="COG0443">
    <property type="taxonomic scope" value="Bacteria"/>
</dbReference>
<dbReference type="Proteomes" id="UP000000440">
    <property type="component" value="Chromosome"/>
</dbReference>
<dbReference type="GO" id="GO:0005524">
    <property type="term" value="F:ATP binding"/>
    <property type="evidence" value="ECO:0007669"/>
    <property type="project" value="UniProtKB-UniRule"/>
</dbReference>
<dbReference type="GO" id="GO:0140662">
    <property type="term" value="F:ATP-dependent protein folding chaperone"/>
    <property type="evidence" value="ECO:0007669"/>
    <property type="project" value="InterPro"/>
</dbReference>
<dbReference type="GO" id="GO:0051082">
    <property type="term" value="F:unfolded protein binding"/>
    <property type="evidence" value="ECO:0007669"/>
    <property type="project" value="InterPro"/>
</dbReference>
<dbReference type="CDD" id="cd10234">
    <property type="entry name" value="ASKHA_NBD_HSP70_DnaK-like"/>
    <property type="match status" value="1"/>
</dbReference>
<dbReference type="FunFam" id="2.60.34.10:FF:000014">
    <property type="entry name" value="Chaperone protein DnaK HSP70"/>
    <property type="match status" value="1"/>
</dbReference>
<dbReference type="FunFam" id="3.30.420.40:FF:000004">
    <property type="entry name" value="Molecular chaperone DnaK"/>
    <property type="match status" value="1"/>
</dbReference>
<dbReference type="FunFam" id="3.90.640.10:FF:000003">
    <property type="entry name" value="Molecular chaperone DnaK"/>
    <property type="match status" value="1"/>
</dbReference>
<dbReference type="Gene3D" id="1.20.1270.10">
    <property type="match status" value="1"/>
</dbReference>
<dbReference type="Gene3D" id="3.30.420.40">
    <property type="match status" value="2"/>
</dbReference>
<dbReference type="Gene3D" id="3.90.640.10">
    <property type="entry name" value="Actin, Chain A, domain 4"/>
    <property type="match status" value="1"/>
</dbReference>
<dbReference type="Gene3D" id="2.60.34.10">
    <property type="entry name" value="Substrate Binding Domain Of DNAk, Chain A, domain 1"/>
    <property type="match status" value="1"/>
</dbReference>
<dbReference type="HAMAP" id="MF_00332">
    <property type="entry name" value="DnaK"/>
    <property type="match status" value="1"/>
</dbReference>
<dbReference type="InterPro" id="IPR043129">
    <property type="entry name" value="ATPase_NBD"/>
</dbReference>
<dbReference type="InterPro" id="IPR012725">
    <property type="entry name" value="Chaperone_DnaK"/>
</dbReference>
<dbReference type="InterPro" id="IPR018181">
    <property type="entry name" value="Heat_shock_70_CS"/>
</dbReference>
<dbReference type="InterPro" id="IPR029048">
    <property type="entry name" value="HSP70_C_sf"/>
</dbReference>
<dbReference type="InterPro" id="IPR029047">
    <property type="entry name" value="HSP70_peptide-bd_sf"/>
</dbReference>
<dbReference type="InterPro" id="IPR013126">
    <property type="entry name" value="Hsp_70_fam"/>
</dbReference>
<dbReference type="NCBIfam" id="NF001413">
    <property type="entry name" value="PRK00290.1"/>
    <property type="match status" value="1"/>
</dbReference>
<dbReference type="NCBIfam" id="NF009947">
    <property type="entry name" value="PRK13411.1"/>
    <property type="match status" value="1"/>
</dbReference>
<dbReference type="NCBIfam" id="TIGR02350">
    <property type="entry name" value="prok_dnaK"/>
    <property type="match status" value="1"/>
</dbReference>
<dbReference type="PANTHER" id="PTHR19375">
    <property type="entry name" value="HEAT SHOCK PROTEIN 70KDA"/>
    <property type="match status" value="1"/>
</dbReference>
<dbReference type="Pfam" id="PF00012">
    <property type="entry name" value="HSP70"/>
    <property type="match status" value="1"/>
</dbReference>
<dbReference type="PRINTS" id="PR00301">
    <property type="entry name" value="HEATSHOCK70"/>
</dbReference>
<dbReference type="SUPFAM" id="SSF53067">
    <property type="entry name" value="Actin-like ATPase domain"/>
    <property type="match status" value="2"/>
</dbReference>
<dbReference type="SUPFAM" id="SSF100920">
    <property type="entry name" value="Heat shock protein 70kD (HSP70), peptide-binding domain"/>
    <property type="match status" value="1"/>
</dbReference>
<dbReference type="PROSITE" id="PS00297">
    <property type="entry name" value="HSP70_1"/>
    <property type="match status" value="1"/>
</dbReference>
<dbReference type="PROSITE" id="PS00329">
    <property type="entry name" value="HSP70_2"/>
    <property type="match status" value="1"/>
</dbReference>
<dbReference type="PROSITE" id="PS01036">
    <property type="entry name" value="HSP70_3"/>
    <property type="match status" value="1"/>
</dbReference>
<organism>
    <name type="scientific">Thermosynechococcus vestitus (strain NIES-2133 / IAM M-273 / BP-1)</name>
    <dbReference type="NCBI Taxonomy" id="197221"/>
    <lineage>
        <taxon>Bacteria</taxon>
        <taxon>Bacillati</taxon>
        <taxon>Cyanobacteriota</taxon>
        <taxon>Cyanophyceae</taxon>
        <taxon>Acaryochloridales</taxon>
        <taxon>Thermosynechococcaceae</taxon>
        <taxon>Thermosynechococcus</taxon>
    </lineage>
</organism>
<accession>Q8DKR6</accession>
<name>DNAK1_THEVB</name>
<reference key="1">
    <citation type="journal article" date="2002" name="DNA Res.">
        <title>Complete genome structure of the thermophilic cyanobacterium Thermosynechococcus elongatus BP-1.</title>
        <authorList>
            <person name="Nakamura Y."/>
            <person name="Kaneko T."/>
            <person name="Sato S."/>
            <person name="Ikeuchi M."/>
            <person name="Katoh H."/>
            <person name="Sasamoto S."/>
            <person name="Watanabe A."/>
            <person name="Iriguchi M."/>
            <person name="Kawashima K."/>
            <person name="Kimura T."/>
            <person name="Kishida Y."/>
            <person name="Kiyokawa C."/>
            <person name="Kohara M."/>
            <person name="Matsumoto M."/>
            <person name="Matsuno A."/>
            <person name="Nakazaki N."/>
            <person name="Shimpo S."/>
            <person name="Sugimoto M."/>
            <person name="Takeuchi C."/>
            <person name="Yamada M."/>
            <person name="Tabata S."/>
        </authorList>
    </citation>
    <scope>NUCLEOTIDE SEQUENCE [LARGE SCALE GENOMIC DNA]</scope>
    <source>
        <strain>NIES-2133 / IAM M-273 / BP-1</strain>
    </source>
</reference>
<sequence>MGKIIGIDLGTTNSCVAVLEGGNPVVIPNAEGGRTTPSIVAFGKSGERLVGQLAKRQAITNAENTIFSIKRFIGRRWEETAQERARVPYACVPGRDGMVDVQIRDRTYTPQEISAMVLQKLKQDAEAYLGEPVTQAVITVPAYFSDAQRQATKDAGAIAGLEVLRIINEPTAASLAYGIDKQDQDQTILVFDLGGGTFDVSILQLGDGVFEVRSTAGNNHLGGDNFDECIVDWLLACFKEQEGIDLSKDKMALQRLREAAEKAKVELSGTLSTSINLPFITADETGPKHLEMELTRSKFEELCAHLVQATLEPMQQAIADAGLTVEEIDRVLLVGGSTRIPAIQELVKQFCGKNPDRSVNPDEAVAIGAAIQGGILGKETTVKDLLLLDVTPLSLGLETLGGVFTKIIERNTTLPTSKTQTFSTASDGQTVVEIAVYQGERPIAKDNKQLACFELTGIAPAPRGVPQIDVTFDIDANGILSVSAVDRATGRQQSVRITNRGGLSSMEIERMRQEAQIYAQVDQIKKEIAELRNQADALLYSYESTIKNHGITLSPELRARIEPVVQSMQAAMVDDNITPDEIRKRMEALQQALVTLGSVVYQQTAGGSMMTSTPTMGRATMSSQATQVLDSEATIISDNEETVVSDYEAVD</sequence>
<keyword id="KW-0067">ATP-binding</keyword>
<keyword id="KW-0143">Chaperone</keyword>
<keyword id="KW-0547">Nucleotide-binding</keyword>
<keyword id="KW-0597">Phosphoprotein</keyword>
<keyword id="KW-1185">Reference proteome</keyword>
<keyword id="KW-0346">Stress response</keyword>
<evidence type="ECO:0000250" key="1"/>
<evidence type="ECO:0000305" key="2"/>
<feature type="chain" id="PRO_0000078560" description="Chaperone protein dnaK1">
    <location>
        <begin position="1"/>
        <end position="651"/>
    </location>
</feature>
<feature type="modified residue" description="Phosphothreonine; by autocatalysis" evidence="1">
    <location>
        <position position="197"/>
    </location>
</feature>